<accession>Q9PTW9</accession>
<name>PSA7_CARAU</name>
<organism>
    <name type="scientific">Carassius auratus</name>
    <name type="common">Goldfish</name>
    <dbReference type="NCBI Taxonomy" id="7957"/>
    <lineage>
        <taxon>Eukaryota</taxon>
        <taxon>Metazoa</taxon>
        <taxon>Chordata</taxon>
        <taxon>Craniata</taxon>
        <taxon>Vertebrata</taxon>
        <taxon>Euteleostomi</taxon>
        <taxon>Actinopterygii</taxon>
        <taxon>Neopterygii</taxon>
        <taxon>Teleostei</taxon>
        <taxon>Ostariophysi</taxon>
        <taxon>Cypriniformes</taxon>
        <taxon>Cyprinidae</taxon>
        <taxon>Cyprininae</taxon>
        <taxon>Carassius</taxon>
    </lineage>
</organism>
<evidence type="ECO:0000250" key="1"/>
<evidence type="ECO:0000255" key="2">
    <source>
        <dbReference type="PROSITE-ProRule" id="PRU00808"/>
    </source>
</evidence>
<sequence length="251" mass="28084">MAARYDRAITVFSPDGHLFQVEYAQEAVKKGSTAVGIRGKDIVVLGVEKKSVAKLQEERTVRKICALDEHVCMAFAGLTADARIVINRARVECQSHRLTVEDPVTVEYITRYIATLKQRYTQSNGRRPFGISALIVGFDFDGTPRLYQTDPSGTYHAWKANAIGRSAKTVREFLEKNYTDEAIASDNDAIKLAIKALLEVVQSGGKNIELAVIRRNQPLKILESKEIETLVAEIEKEKEEEAEKKKQKKSS</sequence>
<keyword id="KW-0963">Cytoplasm</keyword>
<keyword id="KW-0539">Nucleus</keyword>
<keyword id="KW-0647">Proteasome</keyword>
<keyword id="KW-1185">Reference proteome</keyword>
<reference key="1">
    <citation type="journal article" date="2000" name="Eur. J. Biochem.">
        <title>Two proteins, a goldfish 20S proteasome subunit and the protein interacting with 26S proteasome, change in the meiotic cell cycle.</title>
        <authorList>
            <person name="Tokumoto M."/>
            <person name="Horiguchi R."/>
            <person name="Nagahama Y."/>
            <person name="Ishikawa K."/>
            <person name="Tokumoto T."/>
        </authorList>
    </citation>
    <scope>NUCLEOTIDE SEQUENCE [MRNA]</scope>
</reference>
<comment type="function">
    <text>The proteasome is a multicatalytic proteinase complex which is characterized by its ability to cleave peptides with Arg, Phe, Tyr, Leu, and Glu adjacent to the leaving group at neutral or slightly basic pH. The proteasome has an ATP-dependent proteolytic activity.</text>
</comment>
<comment type="subunit">
    <text evidence="1">The 26S proteasome consists of a 20S proteasome core and two 19S regulatory subunits. The 20S proteasome core is composed of 28 subunits that are arranged in four stacked rings, resulting in a barrel-shaped structure. The two end rings are each formed by seven alpha subunits, and the two central rings are each formed by seven beta subunits. The catalytic chamber with the active sites is on the inside of the barrel (By similarity).</text>
</comment>
<comment type="subcellular location">
    <subcellularLocation>
        <location evidence="1">Cytoplasm</location>
    </subcellularLocation>
    <subcellularLocation>
        <location evidence="1">Nucleus</location>
    </subcellularLocation>
</comment>
<comment type="similarity">
    <text evidence="2">Belongs to the peptidase T1A family.</text>
</comment>
<protein>
    <recommendedName>
        <fullName>Proteasome subunit alpha type-7</fullName>
    </recommendedName>
    <alternativeName>
        <fullName>Proteasome subunit alpha 4</fullName>
    </alternativeName>
</protein>
<feature type="chain" id="PRO_0000124146" description="Proteasome subunit alpha type-7">
    <location>
        <begin position="1"/>
        <end position="251"/>
    </location>
</feature>
<proteinExistence type="evidence at transcript level"/>
<dbReference type="EMBL" id="AB027707">
    <property type="protein sequence ID" value="BAA89276.1"/>
    <property type="molecule type" value="mRNA"/>
</dbReference>
<dbReference type="SMR" id="Q9PTW9"/>
<dbReference type="MEROPS" id="T01.974"/>
<dbReference type="OrthoDB" id="3145928at2759"/>
<dbReference type="Proteomes" id="UP000515129">
    <property type="component" value="Unplaced"/>
</dbReference>
<dbReference type="GO" id="GO:0005737">
    <property type="term" value="C:cytoplasm"/>
    <property type="evidence" value="ECO:0007669"/>
    <property type="project" value="UniProtKB-SubCell"/>
</dbReference>
<dbReference type="GO" id="GO:0005634">
    <property type="term" value="C:nucleus"/>
    <property type="evidence" value="ECO:0007669"/>
    <property type="project" value="UniProtKB-SubCell"/>
</dbReference>
<dbReference type="GO" id="GO:0005839">
    <property type="term" value="C:proteasome core complex"/>
    <property type="evidence" value="ECO:0000250"/>
    <property type="project" value="UniProtKB"/>
</dbReference>
<dbReference type="GO" id="GO:0019773">
    <property type="term" value="C:proteasome core complex, alpha-subunit complex"/>
    <property type="evidence" value="ECO:0000250"/>
    <property type="project" value="UniProtKB"/>
</dbReference>
<dbReference type="GO" id="GO:0006511">
    <property type="term" value="P:ubiquitin-dependent protein catabolic process"/>
    <property type="evidence" value="ECO:0007669"/>
    <property type="project" value="InterPro"/>
</dbReference>
<dbReference type="CDD" id="cd03755">
    <property type="entry name" value="proteasome_alpha_type_7"/>
    <property type="match status" value="1"/>
</dbReference>
<dbReference type="FunFam" id="3.60.20.10:FF:000018">
    <property type="entry name" value="Proteasome subunit alpha type"/>
    <property type="match status" value="1"/>
</dbReference>
<dbReference type="Gene3D" id="3.60.20.10">
    <property type="entry name" value="Glutamine Phosphoribosylpyrophosphate, subunit 1, domain 1"/>
    <property type="match status" value="1"/>
</dbReference>
<dbReference type="InterPro" id="IPR029055">
    <property type="entry name" value="Ntn_hydrolases_N"/>
</dbReference>
<dbReference type="InterPro" id="IPR050115">
    <property type="entry name" value="Proteasome_alpha"/>
</dbReference>
<dbReference type="InterPro" id="IPR023332">
    <property type="entry name" value="Proteasome_alpha-type"/>
</dbReference>
<dbReference type="InterPro" id="IPR000426">
    <property type="entry name" value="Proteasome_asu_N"/>
</dbReference>
<dbReference type="InterPro" id="IPR001353">
    <property type="entry name" value="Proteasome_sua/b"/>
</dbReference>
<dbReference type="NCBIfam" id="NF003075">
    <property type="entry name" value="PRK03996.1"/>
    <property type="match status" value="1"/>
</dbReference>
<dbReference type="PANTHER" id="PTHR11599">
    <property type="entry name" value="PROTEASOME SUBUNIT ALPHA/BETA"/>
    <property type="match status" value="1"/>
</dbReference>
<dbReference type="Pfam" id="PF00227">
    <property type="entry name" value="Proteasome"/>
    <property type="match status" value="1"/>
</dbReference>
<dbReference type="Pfam" id="PF10584">
    <property type="entry name" value="Proteasome_A_N"/>
    <property type="match status" value="1"/>
</dbReference>
<dbReference type="SMART" id="SM00948">
    <property type="entry name" value="Proteasome_A_N"/>
    <property type="match status" value="1"/>
</dbReference>
<dbReference type="SUPFAM" id="SSF56235">
    <property type="entry name" value="N-terminal nucleophile aminohydrolases (Ntn hydrolases)"/>
    <property type="match status" value="1"/>
</dbReference>
<dbReference type="PROSITE" id="PS00388">
    <property type="entry name" value="PROTEASOME_ALPHA_1"/>
    <property type="match status" value="1"/>
</dbReference>
<dbReference type="PROSITE" id="PS51475">
    <property type="entry name" value="PROTEASOME_ALPHA_2"/>
    <property type="match status" value="1"/>
</dbReference>
<gene>
    <name type="primary">psma7</name>
</gene>